<accession>P57497</accession>
<feature type="chain" id="PRO_0000105905" description="Adenylyl-sulfate kinase">
    <location>
        <begin position="1"/>
        <end position="206"/>
    </location>
</feature>
<feature type="active site" description="Phosphoserine intermediate" evidence="1">
    <location>
        <position position="110"/>
    </location>
</feature>
<feature type="binding site" evidence="2">
    <location>
        <begin position="36"/>
        <end position="43"/>
    </location>
    <ligand>
        <name>ATP</name>
        <dbReference type="ChEBI" id="CHEBI:30616"/>
    </ligand>
</feature>
<organism>
    <name type="scientific">Buchnera aphidicola subsp. Acyrthosiphon pisum (strain APS)</name>
    <name type="common">Acyrthosiphon pisum symbiotic bacterium</name>
    <dbReference type="NCBI Taxonomy" id="107806"/>
    <lineage>
        <taxon>Bacteria</taxon>
        <taxon>Pseudomonadati</taxon>
        <taxon>Pseudomonadota</taxon>
        <taxon>Gammaproteobacteria</taxon>
        <taxon>Enterobacterales</taxon>
        <taxon>Erwiniaceae</taxon>
        <taxon>Buchnera</taxon>
    </lineage>
</organism>
<sequence length="206" mass="23613">MNNNFQNNIFWQKHSITRLKREKKNGHKSIVLWFTGLSGSGKSTIANFLEEILFKNGINSYLLDGDNIRSGLCSDLSFSLADRNENIRRIGEVVKMMLHAGLIILVSVISPYRNQREMVRQMLGKKNFLEVFIDTPIEICESRDPKKLYKQARTGQISDFTGIQCTYETPNTPDVLLKGTDSLKNNSKKLIKILYNHNIISFINID</sequence>
<evidence type="ECO:0000250" key="1"/>
<evidence type="ECO:0000255" key="2"/>
<evidence type="ECO:0000305" key="3"/>
<keyword id="KW-0067">ATP-binding</keyword>
<keyword id="KW-0418">Kinase</keyword>
<keyword id="KW-0547">Nucleotide-binding</keyword>
<keyword id="KW-0597">Phosphoprotein</keyword>
<keyword id="KW-1185">Reference proteome</keyword>
<keyword id="KW-0808">Transferase</keyword>
<protein>
    <recommendedName>
        <fullName>Adenylyl-sulfate kinase</fullName>
        <ecNumber>2.7.1.25</ecNumber>
    </recommendedName>
    <alternativeName>
        <fullName>APS kinase</fullName>
    </alternativeName>
    <alternativeName>
        <fullName>ATP adenosine-5'-phosphosulfate 3'-phosphotransferase</fullName>
    </alternativeName>
    <alternativeName>
        <fullName>Adenosine-5'-phosphosulfate kinase</fullName>
    </alternativeName>
</protein>
<reference key="1">
    <citation type="journal article" date="2000" name="Nature">
        <title>Genome sequence of the endocellular bacterial symbiont of aphids Buchnera sp. APS.</title>
        <authorList>
            <person name="Shigenobu S."/>
            <person name="Watanabe H."/>
            <person name="Hattori M."/>
            <person name="Sakaki Y."/>
            <person name="Ishikawa H."/>
        </authorList>
    </citation>
    <scope>NUCLEOTIDE SEQUENCE [LARGE SCALE GENOMIC DNA]</scope>
    <source>
        <strain>APS</strain>
    </source>
</reference>
<gene>
    <name type="primary">cysC</name>
    <name type="ordered locus">BU422</name>
</gene>
<proteinExistence type="inferred from homology"/>
<name>CYSC_BUCAI</name>
<dbReference type="EC" id="2.7.1.25"/>
<dbReference type="EMBL" id="BA000003">
    <property type="protein sequence ID" value="BAB13120.1"/>
    <property type="molecule type" value="Genomic_DNA"/>
</dbReference>
<dbReference type="RefSeq" id="NP_240234.1">
    <property type="nucleotide sequence ID" value="NC_002528.1"/>
</dbReference>
<dbReference type="RefSeq" id="WP_010896108.1">
    <property type="nucleotide sequence ID" value="NC_002528.1"/>
</dbReference>
<dbReference type="SMR" id="P57497"/>
<dbReference type="STRING" id="563178.BUAP5A_415"/>
<dbReference type="EnsemblBacteria" id="BAB13120">
    <property type="protein sequence ID" value="BAB13120"/>
    <property type="gene ID" value="BAB13120"/>
</dbReference>
<dbReference type="KEGG" id="buc:BU422"/>
<dbReference type="PATRIC" id="fig|107806.10.peg.431"/>
<dbReference type="eggNOG" id="COG0529">
    <property type="taxonomic scope" value="Bacteria"/>
</dbReference>
<dbReference type="HOGENOM" id="CLU_046932_1_0_6"/>
<dbReference type="UniPathway" id="UPA00140">
    <property type="reaction ID" value="UER00205"/>
</dbReference>
<dbReference type="Proteomes" id="UP000001806">
    <property type="component" value="Chromosome"/>
</dbReference>
<dbReference type="GO" id="GO:0004020">
    <property type="term" value="F:adenylylsulfate kinase activity"/>
    <property type="evidence" value="ECO:0007669"/>
    <property type="project" value="UniProtKB-UniRule"/>
</dbReference>
<dbReference type="GO" id="GO:0005524">
    <property type="term" value="F:ATP binding"/>
    <property type="evidence" value="ECO:0007669"/>
    <property type="project" value="UniProtKB-UniRule"/>
</dbReference>
<dbReference type="GO" id="GO:0070814">
    <property type="term" value="P:hydrogen sulfide biosynthetic process"/>
    <property type="evidence" value="ECO:0007669"/>
    <property type="project" value="UniProtKB-UniRule"/>
</dbReference>
<dbReference type="GO" id="GO:0000103">
    <property type="term" value="P:sulfate assimilation"/>
    <property type="evidence" value="ECO:0007669"/>
    <property type="project" value="UniProtKB-UniRule"/>
</dbReference>
<dbReference type="CDD" id="cd02027">
    <property type="entry name" value="APSK"/>
    <property type="match status" value="1"/>
</dbReference>
<dbReference type="Gene3D" id="3.40.50.300">
    <property type="entry name" value="P-loop containing nucleotide triphosphate hydrolases"/>
    <property type="match status" value="1"/>
</dbReference>
<dbReference type="HAMAP" id="MF_00065">
    <property type="entry name" value="Adenylyl_sulf_kinase"/>
    <property type="match status" value="1"/>
</dbReference>
<dbReference type="InterPro" id="IPR002891">
    <property type="entry name" value="APS_kinase"/>
</dbReference>
<dbReference type="InterPro" id="IPR027417">
    <property type="entry name" value="P-loop_NTPase"/>
</dbReference>
<dbReference type="NCBIfam" id="TIGR00455">
    <property type="entry name" value="apsK"/>
    <property type="match status" value="1"/>
</dbReference>
<dbReference type="NCBIfam" id="NF003013">
    <property type="entry name" value="PRK03846.1"/>
    <property type="match status" value="1"/>
</dbReference>
<dbReference type="PANTHER" id="PTHR11055:SF63">
    <property type="entry name" value="ADENYLYL-SULFATE KINASE 1, CHLOROPLASTIC"/>
    <property type="match status" value="1"/>
</dbReference>
<dbReference type="PANTHER" id="PTHR11055">
    <property type="entry name" value="BIFUNCTIONAL 3'-PHOSPHOADENOSINE 5'-PHOSPHOSULFATE SYNTHASE"/>
    <property type="match status" value="1"/>
</dbReference>
<dbReference type="Pfam" id="PF01583">
    <property type="entry name" value="APS_kinase"/>
    <property type="match status" value="1"/>
</dbReference>
<dbReference type="SUPFAM" id="SSF52540">
    <property type="entry name" value="P-loop containing nucleoside triphosphate hydrolases"/>
    <property type="match status" value="1"/>
</dbReference>
<comment type="function">
    <text evidence="1">Catalyzes the synthesis of activated sulfate.</text>
</comment>
<comment type="catalytic activity">
    <reaction>
        <text>adenosine 5'-phosphosulfate + ATP = 3'-phosphoadenylyl sulfate + ADP + H(+)</text>
        <dbReference type="Rhea" id="RHEA:24152"/>
        <dbReference type="ChEBI" id="CHEBI:15378"/>
        <dbReference type="ChEBI" id="CHEBI:30616"/>
        <dbReference type="ChEBI" id="CHEBI:58243"/>
        <dbReference type="ChEBI" id="CHEBI:58339"/>
        <dbReference type="ChEBI" id="CHEBI:456216"/>
        <dbReference type="EC" id="2.7.1.25"/>
    </reaction>
</comment>
<comment type="pathway">
    <text>Sulfur metabolism; hydrogen sulfide biosynthesis; sulfite from sulfate: step 2/3.</text>
</comment>
<comment type="similarity">
    <text evidence="3">Belongs to the APS kinase family.</text>
</comment>